<sequence length="292" mass="33692">MAKIYSPSFPGTLCLCIFTLLTLMFIRVSARPATFVEDFKAAWSESHIRQMEDGKAIQLVLDQSTGCGFASKRKYLFGRVSMKIKLIPGDSAGTVTAFYMNSDTATVRDELDFEFLGNRSGQPYSVQTNIFAHGKGDREQRVNLWFDPSMDYHTYTILWSHKHIVFYVDDVPIREYKNNEAKNIAYPTSQPMGVYSTLWEADDWATRGGLEKIDWSKAPFYAYYKDFDIEGCPVPGPTFCPSNPHNWWEGYAYQSLNAVEARRYRWVRVNHMVYDYCTDRSRFPVPPPECRA</sequence>
<reference key="1">
    <citation type="journal article" date="1998" name="DNA Res.">
        <title>Structural analysis of Arabidopsis thaliana chromosome 5. IV. Sequence features of the regions of 1,456,315 bp covered by nineteen physically assigned P1 and TAC clones.</title>
        <authorList>
            <person name="Sato S."/>
            <person name="Kaneko T."/>
            <person name="Kotani H."/>
            <person name="Nakamura Y."/>
            <person name="Asamizu E."/>
            <person name="Miyajima N."/>
            <person name="Tabata S."/>
        </authorList>
    </citation>
    <scope>NUCLEOTIDE SEQUENCE [LARGE SCALE GENOMIC DNA]</scope>
    <source>
        <strain>cv. Columbia</strain>
    </source>
</reference>
<reference key="2">
    <citation type="journal article" date="2000" name="Nature">
        <title>Sequence and analysis of chromosome 5 of the plant Arabidopsis thaliana.</title>
        <authorList>
            <person name="Tabata S."/>
            <person name="Kaneko T."/>
            <person name="Nakamura Y."/>
            <person name="Kotani H."/>
            <person name="Kato T."/>
            <person name="Asamizu E."/>
            <person name="Miyajima N."/>
            <person name="Sasamoto S."/>
            <person name="Kimura T."/>
            <person name="Hosouchi T."/>
            <person name="Kawashima K."/>
            <person name="Kohara M."/>
            <person name="Matsumoto M."/>
            <person name="Matsuno A."/>
            <person name="Muraki A."/>
            <person name="Nakayama S."/>
            <person name="Nakazaki N."/>
            <person name="Naruo K."/>
            <person name="Okumura S."/>
            <person name="Shinpo S."/>
            <person name="Takeuchi C."/>
            <person name="Wada T."/>
            <person name="Watanabe A."/>
            <person name="Yamada M."/>
            <person name="Yasuda M."/>
            <person name="Sato S."/>
            <person name="de la Bastide M."/>
            <person name="Huang E."/>
            <person name="Spiegel L."/>
            <person name="Gnoj L."/>
            <person name="O'Shaughnessy A."/>
            <person name="Preston R."/>
            <person name="Habermann K."/>
            <person name="Murray J."/>
            <person name="Johnson D."/>
            <person name="Rohlfing T."/>
            <person name="Nelson J."/>
            <person name="Stoneking T."/>
            <person name="Pepin K."/>
            <person name="Spieth J."/>
            <person name="Sekhon M."/>
            <person name="Armstrong J."/>
            <person name="Becker M."/>
            <person name="Belter E."/>
            <person name="Cordum H."/>
            <person name="Cordes M."/>
            <person name="Courtney L."/>
            <person name="Courtney W."/>
            <person name="Dante M."/>
            <person name="Du H."/>
            <person name="Edwards J."/>
            <person name="Fryman J."/>
            <person name="Haakensen B."/>
            <person name="Lamar E."/>
            <person name="Latreille P."/>
            <person name="Leonard S."/>
            <person name="Meyer R."/>
            <person name="Mulvaney E."/>
            <person name="Ozersky P."/>
            <person name="Riley A."/>
            <person name="Strowmatt C."/>
            <person name="Wagner-McPherson C."/>
            <person name="Wollam A."/>
            <person name="Yoakum M."/>
            <person name="Bell M."/>
            <person name="Dedhia N."/>
            <person name="Parnell L."/>
            <person name="Shah R."/>
            <person name="Rodriguez M."/>
            <person name="Hoon See L."/>
            <person name="Vil D."/>
            <person name="Baker J."/>
            <person name="Kirchoff K."/>
            <person name="Toth K."/>
            <person name="King L."/>
            <person name="Bahret A."/>
            <person name="Miller B."/>
            <person name="Marra M.A."/>
            <person name="Martienssen R."/>
            <person name="McCombie W.R."/>
            <person name="Wilson R.K."/>
            <person name="Murphy G."/>
            <person name="Bancroft I."/>
            <person name="Volckaert G."/>
            <person name="Wambutt R."/>
            <person name="Duesterhoeft A."/>
            <person name="Stiekema W."/>
            <person name="Pohl T."/>
            <person name="Entian K.-D."/>
            <person name="Terryn N."/>
            <person name="Hartley N."/>
            <person name="Bent E."/>
            <person name="Johnson S."/>
            <person name="Langham S.-A."/>
            <person name="McCullagh B."/>
            <person name="Robben J."/>
            <person name="Grymonprez B."/>
            <person name="Zimmermann W."/>
            <person name="Ramsperger U."/>
            <person name="Wedler H."/>
            <person name="Balke K."/>
            <person name="Wedler E."/>
            <person name="Peters S."/>
            <person name="van Staveren M."/>
            <person name="Dirkse W."/>
            <person name="Mooijman P."/>
            <person name="Klein Lankhorst R."/>
            <person name="Weitzenegger T."/>
            <person name="Bothe G."/>
            <person name="Rose M."/>
            <person name="Hauf J."/>
            <person name="Berneiser S."/>
            <person name="Hempel S."/>
            <person name="Feldpausch M."/>
            <person name="Lamberth S."/>
            <person name="Villarroel R."/>
            <person name="Gielen J."/>
            <person name="Ardiles W."/>
            <person name="Bents O."/>
            <person name="Lemcke K."/>
            <person name="Kolesov G."/>
            <person name="Mayer K.F.X."/>
            <person name="Rudd S."/>
            <person name="Schoof H."/>
            <person name="Schueller C."/>
            <person name="Zaccaria P."/>
            <person name="Mewes H.-W."/>
            <person name="Bevan M."/>
            <person name="Fransz P.F."/>
        </authorList>
    </citation>
    <scope>NUCLEOTIDE SEQUENCE [LARGE SCALE GENOMIC DNA]</scope>
    <source>
        <strain>cv. Columbia</strain>
    </source>
</reference>
<reference key="3">
    <citation type="journal article" date="2017" name="Plant J.">
        <title>Araport11: a complete reannotation of the Arabidopsis thaliana reference genome.</title>
        <authorList>
            <person name="Cheng C.Y."/>
            <person name="Krishnakumar V."/>
            <person name="Chan A.P."/>
            <person name="Thibaud-Nissen F."/>
            <person name="Schobel S."/>
            <person name="Town C.D."/>
        </authorList>
    </citation>
    <scope>GENOME REANNOTATION</scope>
    <source>
        <strain>cv. Columbia</strain>
    </source>
</reference>
<reference key="4">
    <citation type="journal article" date="2003" name="Science">
        <title>Empirical analysis of transcriptional activity in the Arabidopsis genome.</title>
        <authorList>
            <person name="Yamada K."/>
            <person name="Lim J."/>
            <person name="Dale J.M."/>
            <person name="Chen H."/>
            <person name="Shinn P."/>
            <person name="Palm C.J."/>
            <person name="Southwick A.M."/>
            <person name="Wu H.C."/>
            <person name="Kim C.J."/>
            <person name="Nguyen M."/>
            <person name="Pham P.K."/>
            <person name="Cheuk R.F."/>
            <person name="Karlin-Newmann G."/>
            <person name="Liu S.X."/>
            <person name="Lam B."/>
            <person name="Sakano H."/>
            <person name="Wu T."/>
            <person name="Yu G."/>
            <person name="Miranda M."/>
            <person name="Quach H.L."/>
            <person name="Tripp M."/>
            <person name="Chang C.H."/>
            <person name="Lee J.M."/>
            <person name="Toriumi M.J."/>
            <person name="Chan M.M."/>
            <person name="Tang C.C."/>
            <person name="Onodera C.S."/>
            <person name="Deng J.M."/>
            <person name="Akiyama K."/>
            <person name="Ansari Y."/>
            <person name="Arakawa T."/>
            <person name="Banh J."/>
            <person name="Banno F."/>
            <person name="Bowser L."/>
            <person name="Brooks S.Y."/>
            <person name="Carninci P."/>
            <person name="Chao Q."/>
            <person name="Choy N."/>
            <person name="Enju A."/>
            <person name="Goldsmith A.D."/>
            <person name="Gurjal M."/>
            <person name="Hansen N.F."/>
            <person name="Hayashizaki Y."/>
            <person name="Johnson-Hopson C."/>
            <person name="Hsuan V.W."/>
            <person name="Iida K."/>
            <person name="Karnes M."/>
            <person name="Khan S."/>
            <person name="Koesema E."/>
            <person name="Ishida J."/>
            <person name="Jiang P.X."/>
            <person name="Jones T."/>
            <person name="Kawai J."/>
            <person name="Kamiya A."/>
            <person name="Meyers C."/>
            <person name="Nakajima M."/>
            <person name="Narusaka M."/>
            <person name="Seki M."/>
            <person name="Sakurai T."/>
            <person name="Satou M."/>
            <person name="Tamse R."/>
            <person name="Vaysberg M."/>
            <person name="Wallender E.K."/>
            <person name="Wong C."/>
            <person name="Yamamura Y."/>
            <person name="Yuan S."/>
            <person name="Shinozaki K."/>
            <person name="Davis R.W."/>
            <person name="Theologis A."/>
            <person name="Ecker J.R."/>
        </authorList>
    </citation>
    <scope>NUCLEOTIDE SEQUENCE [LARGE SCALE MRNA]</scope>
    <source>
        <strain>cv. Columbia</strain>
    </source>
</reference>
<reference key="5">
    <citation type="submission" date="2002-03" db="EMBL/GenBank/DDBJ databases">
        <title>Full-length cDNA from Arabidopsis thaliana.</title>
        <authorList>
            <person name="Brover V.V."/>
            <person name="Troukhan M.E."/>
            <person name="Alexandrov N.A."/>
            <person name="Lu Y.-P."/>
            <person name="Flavell R.B."/>
            <person name="Feldmann K.A."/>
        </authorList>
    </citation>
    <scope>NUCLEOTIDE SEQUENCE [LARGE SCALE MRNA]</scope>
</reference>
<reference key="6">
    <citation type="journal article" date="2002" name="Plant Cell Physiol.">
        <title>The XTH family of enzymes involved in xyloglucan endotransglucosylation and endohydrolysis: current perspectives and a new unifying nomenclature.</title>
        <authorList>
            <person name="Rose J.K.C."/>
            <person name="Braam J."/>
            <person name="Fry S.C."/>
            <person name="Nishitani K."/>
        </authorList>
    </citation>
    <scope>NOMENCLATURE</scope>
</reference>
<accession>Q8LF99</accession>
<accession>O49542</accession>
<accession>Q93ZF8</accession>
<dbReference type="EC" id="2.4.1.207"/>
<dbReference type="EMBL" id="AB010075">
    <property type="protein sequence ID" value="BAB10680.1"/>
    <property type="status" value="ALT_INIT"/>
    <property type="molecule type" value="Genomic_DNA"/>
</dbReference>
<dbReference type="EMBL" id="AL021684">
    <property type="protein sequence ID" value="CAA16685.1"/>
    <property type="status" value="ALT_INIT"/>
    <property type="molecule type" value="Genomic_DNA"/>
</dbReference>
<dbReference type="EMBL" id="CP002688">
    <property type="protein sequence ID" value="AED98096.1"/>
    <property type="molecule type" value="Genomic_DNA"/>
</dbReference>
<dbReference type="EMBL" id="AY044329">
    <property type="protein sequence ID" value="AAK73270.1"/>
    <property type="molecule type" value="mRNA"/>
</dbReference>
<dbReference type="EMBL" id="AY057564">
    <property type="protein sequence ID" value="AAL09803.1"/>
    <property type="molecule type" value="mRNA"/>
</dbReference>
<dbReference type="EMBL" id="AY093983">
    <property type="protein sequence ID" value="AAM16244.1"/>
    <property type="molecule type" value="mRNA"/>
</dbReference>
<dbReference type="EMBL" id="AY084968">
    <property type="protein sequence ID" value="AAM61529.1"/>
    <property type="molecule type" value="mRNA"/>
</dbReference>
<dbReference type="PIR" id="T05895">
    <property type="entry name" value="T05895"/>
</dbReference>
<dbReference type="RefSeq" id="NP_569019.1">
    <property type="nucleotide sequence ID" value="NM_125970.4"/>
</dbReference>
<dbReference type="SMR" id="Q8LF99"/>
<dbReference type="FunCoup" id="Q8LF99">
    <property type="interactions" value="79"/>
</dbReference>
<dbReference type="STRING" id="3702.Q8LF99"/>
<dbReference type="CAZy" id="GH16">
    <property type="family name" value="Glycoside Hydrolase Family 16"/>
</dbReference>
<dbReference type="GlyCosmos" id="Q8LF99">
    <property type="glycosylation" value="1 site, No reported glycans"/>
</dbReference>
<dbReference type="GlyGen" id="Q8LF99">
    <property type="glycosylation" value="1 site"/>
</dbReference>
<dbReference type="PaxDb" id="3702-AT5G65730.1"/>
<dbReference type="ProteomicsDB" id="242457"/>
<dbReference type="EnsemblPlants" id="AT5G65730.1">
    <property type="protein sequence ID" value="AT5G65730.1"/>
    <property type="gene ID" value="AT5G65730"/>
</dbReference>
<dbReference type="GeneID" id="836702"/>
<dbReference type="Gramene" id="AT5G65730.1">
    <property type="protein sequence ID" value="AT5G65730.1"/>
    <property type="gene ID" value="AT5G65730"/>
</dbReference>
<dbReference type="KEGG" id="ath:AT5G65730"/>
<dbReference type="Araport" id="AT5G65730"/>
<dbReference type="TAIR" id="AT5G65730">
    <property type="gene designation" value="XTH6"/>
</dbReference>
<dbReference type="eggNOG" id="ENOG502QSMA">
    <property type="taxonomic scope" value="Eukaryota"/>
</dbReference>
<dbReference type="HOGENOM" id="CLU_048041_0_0_1"/>
<dbReference type="InParanoid" id="Q8LF99"/>
<dbReference type="OMA" id="TILWSHK"/>
<dbReference type="PhylomeDB" id="Q8LF99"/>
<dbReference type="BioCyc" id="ARA:AT5G65730-MONOMER"/>
<dbReference type="PRO" id="PR:Q8LF99"/>
<dbReference type="Proteomes" id="UP000006548">
    <property type="component" value="Chromosome 5"/>
</dbReference>
<dbReference type="ExpressionAtlas" id="Q8LF99">
    <property type="expression patterns" value="baseline and differential"/>
</dbReference>
<dbReference type="GO" id="GO:0048046">
    <property type="term" value="C:apoplast"/>
    <property type="evidence" value="ECO:0007669"/>
    <property type="project" value="UniProtKB-SubCell"/>
</dbReference>
<dbReference type="GO" id="GO:0004553">
    <property type="term" value="F:hydrolase activity, hydrolyzing O-glycosyl compounds"/>
    <property type="evidence" value="ECO:0007669"/>
    <property type="project" value="InterPro"/>
</dbReference>
<dbReference type="GO" id="GO:0030247">
    <property type="term" value="F:polysaccharide binding"/>
    <property type="evidence" value="ECO:0000250"/>
    <property type="project" value="UniProtKB"/>
</dbReference>
<dbReference type="GO" id="GO:0016762">
    <property type="term" value="F:xyloglucan:xyloglucosyl transferase activity"/>
    <property type="evidence" value="ECO:0007669"/>
    <property type="project" value="UniProtKB-EC"/>
</dbReference>
<dbReference type="GO" id="GO:0042546">
    <property type="term" value="P:cell wall biogenesis"/>
    <property type="evidence" value="ECO:0007669"/>
    <property type="project" value="InterPro"/>
</dbReference>
<dbReference type="GO" id="GO:0071555">
    <property type="term" value="P:cell wall organization"/>
    <property type="evidence" value="ECO:0007669"/>
    <property type="project" value="UniProtKB-KW"/>
</dbReference>
<dbReference type="GO" id="GO:0009414">
    <property type="term" value="P:response to water deprivation"/>
    <property type="evidence" value="ECO:0000270"/>
    <property type="project" value="TAIR"/>
</dbReference>
<dbReference type="GO" id="GO:0010411">
    <property type="term" value="P:xyloglucan metabolic process"/>
    <property type="evidence" value="ECO:0007669"/>
    <property type="project" value="InterPro"/>
</dbReference>
<dbReference type="CDD" id="cd02176">
    <property type="entry name" value="GH16_XET"/>
    <property type="match status" value="1"/>
</dbReference>
<dbReference type="FunFam" id="2.60.120.200:FF:000025">
    <property type="entry name" value="Xyloglucan endotransglucosylase/hydrolase"/>
    <property type="match status" value="1"/>
</dbReference>
<dbReference type="Gene3D" id="2.60.120.200">
    <property type="match status" value="1"/>
</dbReference>
<dbReference type="InterPro" id="IPR044791">
    <property type="entry name" value="Beta-glucanase/XTH"/>
</dbReference>
<dbReference type="InterPro" id="IPR013320">
    <property type="entry name" value="ConA-like_dom_sf"/>
</dbReference>
<dbReference type="InterPro" id="IPR000757">
    <property type="entry name" value="GH16"/>
</dbReference>
<dbReference type="InterPro" id="IPR008263">
    <property type="entry name" value="GH16_AS"/>
</dbReference>
<dbReference type="InterPro" id="IPR010713">
    <property type="entry name" value="XET_C"/>
</dbReference>
<dbReference type="InterPro" id="IPR016455">
    <property type="entry name" value="XTH"/>
</dbReference>
<dbReference type="PANTHER" id="PTHR31062">
    <property type="entry name" value="XYLOGLUCAN ENDOTRANSGLUCOSYLASE/HYDROLASE PROTEIN 8-RELATED"/>
    <property type="match status" value="1"/>
</dbReference>
<dbReference type="Pfam" id="PF00722">
    <property type="entry name" value="Glyco_hydro_16"/>
    <property type="match status" value="1"/>
</dbReference>
<dbReference type="Pfam" id="PF06955">
    <property type="entry name" value="XET_C"/>
    <property type="match status" value="1"/>
</dbReference>
<dbReference type="PIRSF" id="PIRSF005604">
    <property type="entry name" value="XET"/>
    <property type="match status" value="1"/>
</dbReference>
<dbReference type="SUPFAM" id="SSF49899">
    <property type="entry name" value="Concanavalin A-like lectins/glucanases"/>
    <property type="match status" value="1"/>
</dbReference>
<dbReference type="PROSITE" id="PS01034">
    <property type="entry name" value="GH16_1"/>
    <property type="match status" value="1"/>
</dbReference>
<dbReference type="PROSITE" id="PS51762">
    <property type="entry name" value="GH16_2"/>
    <property type="match status" value="1"/>
</dbReference>
<feature type="signal peptide" evidence="3">
    <location>
        <begin position="1"/>
        <end position="30"/>
    </location>
</feature>
<feature type="chain" id="PRO_0000011806" description="Probable xyloglucan endotransglucosylase/hydrolase protein 6">
    <location>
        <begin position="31"/>
        <end position="292"/>
    </location>
</feature>
<feature type="domain" description="GH16" evidence="4">
    <location>
        <begin position="31"/>
        <end position="224"/>
    </location>
</feature>
<feature type="active site" description="Nucleophile" evidence="5">
    <location>
        <position position="110"/>
    </location>
</feature>
<feature type="active site" description="Proton donor" evidence="5">
    <location>
        <position position="114"/>
    </location>
</feature>
<feature type="binding site" evidence="2">
    <location>
        <position position="114"/>
    </location>
    <ligand>
        <name>xyloglucan</name>
        <dbReference type="ChEBI" id="CHEBI:18233"/>
    </ligand>
</feature>
<feature type="binding site" evidence="2">
    <location>
        <begin position="127"/>
        <end position="129"/>
    </location>
    <ligand>
        <name>xyloglucan</name>
        <dbReference type="ChEBI" id="CHEBI:18233"/>
    </ligand>
</feature>
<feature type="binding site" evidence="2">
    <location>
        <begin position="137"/>
        <end position="139"/>
    </location>
    <ligand>
        <name>xyloglucan</name>
        <dbReference type="ChEBI" id="CHEBI:18233"/>
    </ligand>
</feature>
<feature type="binding site" evidence="2">
    <location>
        <begin position="203"/>
        <end position="204"/>
    </location>
    <ligand>
        <name>xyloglucan</name>
        <dbReference type="ChEBI" id="CHEBI:18233"/>
    </ligand>
</feature>
<feature type="binding site" evidence="2">
    <location>
        <position position="208"/>
    </location>
    <ligand>
        <name>xyloglucan</name>
        <dbReference type="ChEBI" id="CHEBI:18233"/>
    </ligand>
</feature>
<feature type="binding site" evidence="2">
    <location>
        <position position="282"/>
    </location>
    <ligand>
        <name>xyloglucan</name>
        <dbReference type="ChEBI" id="CHEBI:18233"/>
    </ligand>
</feature>
<feature type="site" description="Important for catalytic activity" evidence="2">
    <location>
        <position position="112"/>
    </location>
</feature>
<feature type="glycosylation site" description="N-linked (GlcNAc...) asparagine" evidence="3">
    <location>
        <position position="118"/>
    </location>
</feature>
<feature type="disulfide bond" evidence="2">
    <location>
        <begin position="232"/>
        <end position="240"/>
    </location>
</feature>
<feature type="disulfide bond" evidence="2">
    <location>
        <begin position="277"/>
        <end position="290"/>
    </location>
</feature>
<feature type="sequence conflict" description="In Ref. 5; AAM61529." evidence="6" ref="5">
    <original>K</original>
    <variation>R</variation>
    <location>
        <position position="83"/>
    </location>
</feature>
<proteinExistence type="evidence at transcript level"/>
<comment type="function">
    <text evidence="1">Catalyzes xyloglucan endohydrolysis (XEH) and/or endotransglycosylation (XET). Cleaves and religates xyloglucan polymers, an essential constituent of the primary cell wall, and thereby participates in cell wall construction of growing tissues (By similarity).</text>
</comment>
<comment type="catalytic activity">
    <reaction>
        <text>breaks a beta-(1-&gt;4) bond in the backbone of a xyloglucan and transfers the xyloglucanyl segment on to O-4 of the non-reducing terminal glucose residue of an acceptor, which can be a xyloglucan or an oligosaccharide of xyloglucan.</text>
        <dbReference type="EC" id="2.4.1.207"/>
    </reaction>
</comment>
<comment type="subcellular location">
    <subcellularLocation>
        <location evidence="6">Secreted</location>
        <location evidence="6">Cell wall</location>
    </subcellularLocation>
    <subcellularLocation>
        <location evidence="6">Secreted</location>
        <location evidence="6">Extracellular space</location>
        <location evidence="6">Apoplast</location>
    </subcellularLocation>
</comment>
<comment type="PTM">
    <text evidence="1">Contains at least one intrachain disulfide bond essential for its enzymatic activity.</text>
</comment>
<comment type="similarity">
    <text evidence="6">Belongs to the glycosyl hydrolase 16 family. XTH group 1 subfamily.</text>
</comment>
<comment type="sequence caution" evidence="6">
    <conflict type="erroneous initiation">
        <sequence resource="EMBL-CDS" id="BAB10680"/>
    </conflict>
</comment>
<comment type="sequence caution" evidence="6">
    <conflict type="erroneous initiation">
        <sequence resource="EMBL-CDS" id="CAA16685"/>
    </conflict>
</comment>
<keyword id="KW-0052">Apoplast</keyword>
<keyword id="KW-0134">Cell wall</keyword>
<keyword id="KW-0961">Cell wall biogenesis/degradation</keyword>
<keyword id="KW-1015">Disulfide bond</keyword>
<keyword id="KW-0325">Glycoprotein</keyword>
<keyword id="KW-0326">Glycosidase</keyword>
<keyword id="KW-0378">Hydrolase</keyword>
<keyword id="KW-1185">Reference proteome</keyword>
<keyword id="KW-0964">Secreted</keyword>
<keyword id="KW-0732">Signal</keyword>
<keyword id="KW-0808">Transferase</keyword>
<organism>
    <name type="scientific">Arabidopsis thaliana</name>
    <name type="common">Mouse-ear cress</name>
    <dbReference type="NCBI Taxonomy" id="3702"/>
    <lineage>
        <taxon>Eukaryota</taxon>
        <taxon>Viridiplantae</taxon>
        <taxon>Streptophyta</taxon>
        <taxon>Embryophyta</taxon>
        <taxon>Tracheophyta</taxon>
        <taxon>Spermatophyta</taxon>
        <taxon>Magnoliopsida</taxon>
        <taxon>eudicotyledons</taxon>
        <taxon>Gunneridae</taxon>
        <taxon>Pentapetalae</taxon>
        <taxon>rosids</taxon>
        <taxon>malvids</taxon>
        <taxon>Brassicales</taxon>
        <taxon>Brassicaceae</taxon>
        <taxon>Camelineae</taxon>
        <taxon>Arabidopsis</taxon>
    </lineage>
</organism>
<name>XTH6_ARATH</name>
<gene>
    <name type="primary">XTH6</name>
    <name type="synonym">XTR10</name>
    <name type="ordered locus">At5g65730</name>
    <name type="ORF">MPA24.8</name>
</gene>
<evidence type="ECO:0000250" key="1"/>
<evidence type="ECO:0000250" key="2">
    <source>
        <dbReference type="UniProtKB" id="Q8GZD5"/>
    </source>
</evidence>
<evidence type="ECO:0000255" key="3"/>
<evidence type="ECO:0000255" key="4">
    <source>
        <dbReference type="PROSITE-ProRule" id="PRU01098"/>
    </source>
</evidence>
<evidence type="ECO:0000255" key="5">
    <source>
        <dbReference type="PROSITE-ProRule" id="PRU10064"/>
    </source>
</evidence>
<evidence type="ECO:0000305" key="6"/>
<protein>
    <recommendedName>
        <fullName>Probable xyloglucan endotransglucosylase/hydrolase protein 6</fullName>
        <shortName>At-XTH6</shortName>
        <shortName>XTH-6</shortName>
        <ecNumber>2.4.1.207</ecNumber>
    </recommendedName>
</protein>